<feature type="chain" id="PRO_0000167331" description="UPF0102 protein alr1796">
    <location>
        <begin position="1"/>
        <end position="140"/>
    </location>
</feature>
<reference key="1">
    <citation type="journal article" date="2001" name="DNA Res.">
        <title>Complete genomic sequence of the filamentous nitrogen-fixing cyanobacterium Anabaena sp. strain PCC 7120.</title>
        <authorList>
            <person name="Kaneko T."/>
            <person name="Nakamura Y."/>
            <person name="Wolk C.P."/>
            <person name="Kuritz T."/>
            <person name="Sasamoto S."/>
            <person name="Watanabe A."/>
            <person name="Iriguchi M."/>
            <person name="Ishikawa A."/>
            <person name="Kawashima K."/>
            <person name="Kimura T."/>
            <person name="Kishida Y."/>
            <person name="Kohara M."/>
            <person name="Matsumoto M."/>
            <person name="Matsuno A."/>
            <person name="Muraki A."/>
            <person name="Nakazaki N."/>
            <person name="Shimpo S."/>
            <person name="Sugimoto M."/>
            <person name="Takazawa M."/>
            <person name="Yamada M."/>
            <person name="Yasuda M."/>
            <person name="Tabata S."/>
        </authorList>
    </citation>
    <scope>NUCLEOTIDE SEQUENCE [LARGE SCALE GENOMIC DNA]</scope>
    <source>
        <strain>PCC 7120 / SAG 25.82 / UTEX 2576</strain>
    </source>
</reference>
<name>Y1796_NOSS1</name>
<evidence type="ECO:0000255" key="1">
    <source>
        <dbReference type="HAMAP-Rule" id="MF_00048"/>
    </source>
</evidence>
<accession>Q8YW20</accession>
<dbReference type="EMBL" id="BA000019">
    <property type="protein sequence ID" value="BAB73495.1"/>
    <property type="molecule type" value="Genomic_DNA"/>
</dbReference>
<dbReference type="PIR" id="AF2030">
    <property type="entry name" value="AF2030"/>
</dbReference>
<dbReference type="RefSeq" id="WP_010995964.1">
    <property type="nucleotide sequence ID" value="NZ_RSCN01000019.1"/>
</dbReference>
<dbReference type="SMR" id="Q8YW20"/>
<dbReference type="STRING" id="103690.gene:10493814"/>
<dbReference type="KEGG" id="ana:alr1796"/>
<dbReference type="eggNOG" id="COG0792">
    <property type="taxonomic scope" value="Bacteria"/>
</dbReference>
<dbReference type="OrthoDB" id="9802516at2"/>
<dbReference type="Proteomes" id="UP000002483">
    <property type="component" value="Chromosome"/>
</dbReference>
<dbReference type="GO" id="GO:0003676">
    <property type="term" value="F:nucleic acid binding"/>
    <property type="evidence" value="ECO:0007669"/>
    <property type="project" value="InterPro"/>
</dbReference>
<dbReference type="Gene3D" id="3.40.1350.10">
    <property type="match status" value="1"/>
</dbReference>
<dbReference type="HAMAP" id="MF_00048">
    <property type="entry name" value="UPF0102"/>
    <property type="match status" value="1"/>
</dbReference>
<dbReference type="InterPro" id="IPR011335">
    <property type="entry name" value="Restrct_endonuc-II-like"/>
</dbReference>
<dbReference type="InterPro" id="IPR011856">
    <property type="entry name" value="tRNA_endonuc-like_dom_sf"/>
</dbReference>
<dbReference type="InterPro" id="IPR003509">
    <property type="entry name" value="UPF0102_YraN-like"/>
</dbReference>
<dbReference type="NCBIfam" id="TIGR00252">
    <property type="entry name" value="YraN family protein"/>
    <property type="match status" value="1"/>
</dbReference>
<dbReference type="PANTHER" id="PTHR34039">
    <property type="entry name" value="UPF0102 PROTEIN YRAN"/>
    <property type="match status" value="1"/>
</dbReference>
<dbReference type="PANTHER" id="PTHR34039:SF1">
    <property type="entry name" value="UPF0102 PROTEIN YRAN"/>
    <property type="match status" value="1"/>
</dbReference>
<dbReference type="Pfam" id="PF02021">
    <property type="entry name" value="UPF0102"/>
    <property type="match status" value="1"/>
</dbReference>
<dbReference type="SUPFAM" id="SSF52980">
    <property type="entry name" value="Restriction endonuclease-like"/>
    <property type="match status" value="1"/>
</dbReference>
<sequence>MSHLNIANLGEDFVAQWLQSTGWIILHRQFSCRWGEIDIIAQHTRNNQESILAFVEVKTRSPGNWDDGGRGAITLKKQAKIERTAKIFLAKYPDKAEYICRFDVAIVAYQGISQQDHAAIGEYKFQLQEYIPAAFDCLIY</sequence>
<organism>
    <name type="scientific">Nostoc sp. (strain PCC 7120 / SAG 25.82 / UTEX 2576)</name>
    <dbReference type="NCBI Taxonomy" id="103690"/>
    <lineage>
        <taxon>Bacteria</taxon>
        <taxon>Bacillati</taxon>
        <taxon>Cyanobacteriota</taxon>
        <taxon>Cyanophyceae</taxon>
        <taxon>Nostocales</taxon>
        <taxon>Nostocaceae</taxon>
        <taxon>Nostoc</taxon>
    </lineage>
</organism>
<comment type="similarity">
    <text evidence="1">Belongs to the UPF0102 family.</text>
</comment>
<protein>
    <recommendedName>
        <fullName evidence="1">UPF0102 protein alr1796</fullName>
    </recommendedName>
</protein>
<proteinExistence type="inferred from homology"/>
<gene>
    <name type="ordered locus">alr1796</name>
</gene>
<keyword id="KW-1185">Reference proteome</keyword>